<organism>
    <name type="scientific">Shigella sonnei (strain Ss046)</name>
    <dbReference type="NCBI Taxonomy" id="300269"/>
    <lineage>
        <taxon>Bacteria</taxon>
        <taxon>Pseudomonadati</taxon>
        <taxon>Pseudomonadota</taxon>
        <taxon>Gammaproteobacteria</taxon>
        <taxon>Enterobacterales</taxon>
        <taxon>Enterobacteriaceae</taxon>
        <taxon>Shigella</taxon>
    </lineage>
</organism>
<name>BTUC_SHISS</name>
<reference key="1">
    <citation type="journal article" date="2005" name="Nucleic Acids Res.">
        <title>Genome dynamics and diversity of Shigella species, the etiologic agents of bacillary dysentery.</title>
        <authorList>
            <person name="Yang F."/>
            <person name="Yang J."/>
            <person name="Zhang X."/>
            <person name="Chen L."/>
            <person name="Jiang Y."/>
            <person name="Yan Y."/>
            <person name="Tang X."/>
            <person name="Wang J."/>
            <person name="Xiong Z."/>
            <person name="Dong J."/>
            <person name="Xue Y."/>
            <person name="Zhu Y."/>
            <person name="Xu X."/>
            <person name="Sun L."/>
            <person name="Chen S."/>
            <person name="Nie H."/>
            <person name="Peng J."/>
            <person name="Xu J."/>
            <person name="Wang Y."/>
            <person name="Yuan Z."/>
            <person name="Wen Y."/>
            <person name="Yao Z."/>
            <person name="Shen Y."/>
            <person name="Qiang B."/>
            <person name="Hou Y."/>
            <person name="Yu J."/>
            <person name="Jin Q."/>
        </authorList>
    </citation>
    <scope>NUCLEOTIDE SEQUENCE [LARGE SCALE GENOMIC DNA]</scope>
    <source>
        <strain>Ss046</strain>
    </source>
</reference>
<proteinExistence type="inferred from homology"/>
<accession>Q3Z259</accession>
<evidence type="ECO:0000255" key="1">
    <source>
        <dbReference type="HAMAP-Rule" id="MF_01004"/>
    </source>
</evidence>
<comment type="function">
    <text evidence="1">Part of the ABC transporter complex BtuCDF involved in vitamin B12 import. Involved in the translocation of the substrate across the membrane.</text>
</comment>
<comment type="subunit">
    <text evidence="1">The complex is composed of two ATP-binding proteins (BtuD), two transmembrane proteins (BtuC) and a solute-binding protein (BtuF).</text>
</comment>
<comment type="subcellular location">
    <subcellularLocation>
        <location evidence="1">Cell inner membrane</location>
        <topology evidence="1">Multi-pass membrane protein</topology>
    </subcellularLocation>
</comment>
<comment type="similarity">
    <text evidence="1">Belongs to the binding-protein-dependent transport system permease family. FecCD subfamily.</text>
</comment>
<dbReference type="EMBL" id="CP000038">
    <property type="protein sequence ID" value="AAZ88153.1"/>
    <property type="molecule type" value="Genomic_DNA"/>
</dbReference>
<dbReference type="RefSeq" id="WP_000956531.1">
    <property type="nucleotide sequence ID" value="NC_007384.1"/>
</dbReference>
<dbReference type="SMR" id="Q3Z259"/>
<dbReference type="GeneID" id="93775875"/>
<dbReference type="KEGG" id="ssn:SSON_1447"/>
<dbReference type="HOGENOM" id="CLU_013016_0_3_6"/>
<dbReference type="Proteomes" id="UP000002529">
    <property type="component" value="Chromosome"/>
</dbReference>
<dbReference type="GO" id="GO:0005886">
    <property type="term" value="C:plasma membrane"/>
    <property type="evidence" value="ECO:0007669"/>
    <property type="project" value="UniProtKB-SubCell"/>
</dbReference>
<dbReference type="GO" id="GO:0090482">
    <property type="term" value="F:vitamin transmembrane transporter activity"/>
    <property type="evidence" value="ECO:0007669"/>
    <property type="project" value="UniProtKB-UniRule"/>
</dbReference>
<dbReference type="GO" id="GO:0015889">
    <property type="term" value="P:cobalamin transport"/>
    <property type="evidence" value="ECO:0007669"/>
    <property type="project" value="UniProtKB-UniRule"/>
</dbReference>
<dbReference type="CDD" id="cd06550">
    <property type="entry name" value="TM_ABC_iron-siderophores_like"/>
    <property type="match status" value="1"/>
</dbReference>
<dbReference type="FunFam" id="1.10.3470.10:FF:000001">
    <property type="entry name" value="Vitamin B12 ABC transporter permease BtuC"/>
    <property type="match status" value="1"/>
</dbReference>
<dbReference type="Gene3D" id="1.10.3470.10">
    <property type="entry name" value="ABC transporter involved in vitamin B12 uptake, BtuC"/>
    <property type="match status" value="1"/>
</dbReference>
<dbReference type="HAMAP" id="MF_01004">
    <property type="entry name" value="BtuC"/>
    <property type="match status" value="1"/>
</dbReference>
<dbReference type="InterPro" id="IPR037294">
    <property type="entry name" value="ABC_BtuC-like"/>
</dbReference>
<dbReference type="InterPro" id="IPR023691">
    <property type="entry name" value="ABC_transptr_BtuC"/>
</dbReference>
<dbReference type="InterPro" id="IPR000522">
    <property type="entry name" value="ABC_transptr_permease_BtuC"/>
</dbReference>
<dbReference type="NCBIfam" id="NF003001">
    <property type="entry name" value="PRK03784.1"/>
    <property type="match status" value="1"/>
</dbReference>
<dbReference type="PANTHER" id="PTHR30472">
    <property type="entry name" value="FERRIC ENTEROBACTIN TRANSPORT SYSTEM PERMEASE PROTEIN"/>
    <property type="match status" value="1"/>
</dbReference>
<dbReference type="PANTHER" id="PTHR30472:SF29">
    <property type="entry name" value="VITAMIN B12 IMPORT SYSTEM PERMEASE PROTEIN BTUC"/>
    <property type="match status" value="1"/>
</dbReference>
<dbReference type="Pfam" id="PF01032">
    <property type="entry name" value="FecCD"/>
    <property type="match status" value="1"/>
</dbReference>
<dbReference type="SUPFAM" id="SSF81345">
    <property type="entry name" value="ABC transporter involved in vitamin B12 uptake, BtuC"/>
    <property type="match status" value="1"/>
</dbReference>
<protein>
    <recommendedName>
        <fullName evidence="1">Vitamin B12 import system permease protein BtuC</fullName>
    </recommendedName>
</protein>
<gene>
    <name evidence="1" type="primary">btuC</name>
    <name type="ordered locus">SSON_1447</name>
</gene>
<sequence length="326" mass="34935">MLTLARQQQRQNIRWLLCLSVLMLLALLLSLCAGEQWISPGDWFTPRGELFVWQIRLPRTLAVLLVGAALAISGAVMQALFENPLAEPGLLGVSNGAGVGLIAAVLLGQGQLPNWALGLCAIAGALIITLILLRFARRHLSTSRLLLAGVALGIICSALMTWAIYFSTSVDLRQLMYWMMGGFGGVDWRQSWLMLALIPVLLWICCQSRPMNMLALGEISARQLGLPLWFWRNVLVAATGWMVGVSVALAGAIGFIGLVIPHILRLCGLTDHRVLLPGCALAGASAVLLADIVARLALAAAELPIGVVTATLGAPVFIWLLLKAGR</sequence>
<feature type="chain" id="PRO_1000062780" description="Vitamin B12 import system permease protein BtuC">
    <location>
        <begin position="1"/>
        <end position="326"/>
    </location>
</feature>
<feature type="transmembrane region" description="Helical" evidence="1">
    <location>
        <begin position="15"/>
        <end position="35"/>
    </location>
</feature>
<feature type="transmembrane region" description="Helical" evidence="1">
    <location>
        <begin position="61"/>
        <end position="81"/>
    </location>
</feature>
<feature type="transmembrane region" description="Helical" evidence="1">
    <location>
        <begin position="88"/>
        <end position="108"/>
    </location>
</feature>
<feature type="transmembrane region" description="Helical" evidence="1">
    <location>
        <begin position="112"/>
        <end position="132"/>
    </location>
</feature>
<feature type="transmembrane region" description="Helical" evidence="1">
    <location>
        <begin position="146"/>
        <end position="166"/>
    </location>
</feature>
<feature type="transmembrane region" description="Helical" evidence="1">
    <location>
        <begin position="184"/>
        <end position="204"/>
    </location>
</feature>
<feature type="transmembrane region" description="Helical" evidence="1">
    <location>
        <begin position="240"/>
        <end position="260"/>
    </location>
</feature>
<feature type="transmembrane region" description="Helical" evidence="1">
    <location>
        <begin position="274"/>
        <end position="294"/>
    </location>
</feature>
<feature type="transmembrane region" description="Helical" evidence="1">
    <location>
        <begin position="302"/>
        <end position="322"/>
    </location>
</feature>
<keyword id="KW-0997">Cell inner membrane</keyword>
<keyword id="KW-1003">Cell membrane</keyword>
<keyword id="KW-0472">Membrane</keyword>
<keyword id="KW-1185">Reference proteome</keyword>
<keyword id="KW-0812">Transmembrane</keyword>
<keyword id="KW-1133">Transmembrane helix</keyword>
<keyword id="KW-0813">Transport</keyword>